<gene>
    <name evidence="1" type="primary">metK</name>
    <name type="ordered locus">SSON_3096</name>
</gene>
<evidence type="ECO:0000255" key="1">
    <source>
        <dbReference type="HAMAP-Rule" id="MF_00086"/>
    </source>
</evidence>
<accession>Q3YXS9</accession>
<proteinExistence type="inferred from homology"/>
<name>METK_SHISS</name>
<comment type="function">
    <text evidence="1">Catalyzes the formation of S-adenosylmethionine (AdoMet) from methionine and ATP. The overall synthetic reaction is composed of two sequential steps, AdoMet formation and the subsequent tripolyphosphate hydrolysis which occurs prior to release of AdoMet from the enzyme.</text>
</comment>
<comment type="catalytic activity">
    <reaction evidence="1">
        <text>L-methionine + ATP + H2O = S-adenosyl-L-methionine + phosphate + diphosphate</text>
        <dbReference type="Rhea" id="RHEA:21080"/>
        <dbReference type="ChEBI" id="CHEBI:15377"/>
        <dbReference type="ChEBI" id="CHEBI:30616"/>
        <dbReference type="ChEBI" id="CHEBI:33019"/>
        <dbReference type="ChEBI" id="CHEBI:43474"/>
        <dbReference type="ChEBI" id="CHEBI:57844"/>
        <dbReference type="ChEBI" id="CHEBI:59789"/>
        <dbReference type="EC" id="2.5.1.6"/>
    </reaction>
</comment>
<comment type="cofactor">
    <cofactor evidence="1">
        <name>Mg(2+)</name>
        <dbReference type="ChEBI" id="CHEBI:18420"/>
    </cofactor>
    <text evidence="1">Binds 2 divalent ions per subunit.</text>
</comment>
<comment type="cofactor">
    <cofactor evidence="1">
        <name>K(+)</name>
        <dbReference type="ChEBI" id="CHEBI:29103"/>
    </cofactor>
    <text evidence="1">Binds 1 potassium ion per subunit.</text>
</comment>
<comment type="pathway">
    <text evidence="1">Amino-acid biosynthesis; S-adenosyl-L-methionine biosynthesis; S-adenosyl-L-methionine from L-methionine: step 1/1.</text>
</comment>
<comment type="subunit">
    <text evidence="1">Homotetramer; dimer of dimers.</text>
</comment>
<comment type="subcellular location">
    <subcellularLocation>
        <location evidence="1">Cytoplasm</location>
    </subcellularLocation>
</comment>
<comment type="similarity">
    <text evidence="1">Belongs to the AdoMet synthase family.</text>
</comment>
<protein>
    <recommendedName>
        <fullName evidence="1">S-adenosylmethionine synthase</fullName>
        <shortName evidence="1">AdoMet synthase</shortName>
        <ecNumber evidence="1">2.5.1.6</ecNumber>
    </recommendedName>
    <alternativeName>
        <fullName evidence="1">MAT</fullName>
    </alternativeName>
    <alternativeName>
        <fullName evidence="1">Methionine adenosyltransferase</fullName>
    </alternativeName>
</protein>
<reference key="1">
    <citation type="journal article" date="2005" name="Nucleic Acids Res.">
        <title>Genome dynamics and diversity of Shigella species, the etiologic agents of bacillary dysentery.</title>
        <authorList>
            <person name="Yang F."/>
            <person name="Yang J."/>
            <person name="Zhang X."/>
            <person name="Chen L."/>
            <person name="Jiang Y."/>
            <person name="Yan Y."/>
            <person name="Tang X."/>
            <person name="Wang J."/>
            <person name="Xiong Z."/>
            <person name="Dong J."/>
            <person name="Xue Y."/>
            <person name="Zhu Y."/>
            <person name="Xu X."/>
            <person name="Sun L."/>
            <person name="Chen S."/>
            <person name="Nie H."/>
            <person name="Peng J."/>
            <person name="Xu J."/>
            <person name="Wang Y."/>
            <person name="Yuan Z."/>
            <person name="Wen Y."/>
            <person name="Yao Z."/>
            <person name="Shen Y."/>
            <person name="Qiang B."/>
            <person name="Hou Y."/>
            <person name="Yu J."/>
            <person name="Jin Q."/>
        </authorList>
    </citation>
    <scope>NUCLEOTIDE SEQUENCE [LARGE SCALE GENOMIC DNA]</scope>
    <source>
        <strain>Ss046</strain>
    </source>
</reference>
<sequence length="384" mass="41952">MAKHLFTSESVSEGHPDKIADQISDAVLDAILEQDPKARVACETYVKTGMVLVGGEITTSAWVDIEEITRNTVREIGYVHSDMGFDANSCAVLSAIGKQSPDINQGVDRADPLEQGAGDQGLMFGYATNETDVLMPAPITYAHRLVQRQAEVRKNGTLPWLRPDAKSQVTFQYDDGKIVGIDAVVLSTQHSEEIDQKSLQEAVMEEIIKPILPAEWLTSATKFFINPTGRFVIGGPMGDCGLTGRKIIVDTYGGMARHGGGAFSGKDPSKVDRSAAYAARYVAKNIVAAGLADRCEIQVSYAIGVAEPTSIMVETFGTEKVPSEQLTLLVREFFDLRPYGLIQMLDLLHPIYKETAAYGHFGREHFPWEKTDKAQLLRDAAGLK</sequence>
<dbReference type="EC" id="2.5.1.6" evidence="1"/>
<dbReference type="EMBL" id="CP000038">
    <property type="protein sequence ID" value="AAZ89683.1"/>
    <property type="molecule type" value="Genomic_DNA"/>
</dbReference>
<dbReference type="RefSeq" id="WP_001062128.1">
    <property type="nucleotide sequence ID" value="NC_007384.1"/>
</dbReference>
<dbReference type="SMR" id="Q3YXS9"/>
<dbReference type="GeneID" id="93779055"/>
<dbReference type="KEGG" id="ssn:SSON_3096"/>
<dbReference type="HOGENOM" id="CLU_041802_1_1_6"/>
<dbReference type="UniPathway" id="UPA00315">
    <property type="reaction ID" value="UER00080"/>
</dbReference>
<dbReference type="Proteomes" id="UP000002529">
    <property type="component" value="Chromosome"/>
</dbReference>
<dbReference type="GO" id="GO:0005737">
    <property type="term" value="C:cytoplasm"/>
    <property type="evidence" value="ECO:0007669"/>
    <property type="project" value="UniProtKB-SubCell"/>
</dbReference>
<dbReference type="GO" id="GO:0005524">
    <property type="term" value="F:ATP binding"/>
    <property type="evidence" value="ECO:0007669"/>
    <property type="project" value="UniProtKB-UniRule"/>
</dbReference>
<dbReference type="GO" id="GO:0000287">
    <property type="term" value="F:magnesium ion binding"/>
    <property type="evidence" value="ECO:0007669"/>
    <property type="project" value="UniProtKB-UniRule"/>
</dbReference>
<dbReference type="GO" id="GO:0004478">
    <property type="term" value="F:methionine adenosyltransferase activity"/>
    <property type="evidence" value="ECO:0007669"/>
    <property type="project" value="UniProtKB-UniRule"/>
</dbReference>
<dbReference type="GO" id="GO:0006730">
    <property type="term" value="P:one-carbon metabolic process"/>
    <property type="evidence" value="ECO:0007669"/>
    <property type="project" value="UniProtKB-KW"/>
</dbReference>
<dbReference type="GO" id="GO:0006556">
    <property type="term" value="P:S-adenosylmethionine biosynthetic process"/>
    <property type="evidence" value="ECO:0007669"/>
    <property type="project" value="UniProtKB-UniRule"/>
</dbReference>
<dbReference type="CDD" id="cd18079">
    <property type="entry name" value="S-AdoMet_synt"/>
    <property type="match status" value="1"/>
</dbReference>
<dbReference type="FunFam" id="3.30.300.10:FF:000001">
    <property type="entry name" value="S-adenosylmethionine synthase"/>
    <property type="match status" value="1"/>
</dbReference>
<dbReference type="FunFam" id="3.30.300.10:FF:000003">
    <property type="entry name" value="S-adenosylmethionine synthase"/>
    <property type="match status" value="1"/>
</dbReference>
<dbReference type="Gene3D" id="3.30.300.10">
    <property type="match status" value="3"/>
</dbReference>
<dbReference type="HAMAP" id="MF_00086">
    <property type="entry name" value="S_AdoMet_synth1"/>
    <property type="match status" value="1"/>
</dbReference>
<dbReference type="InterPro" id="IPR022631">
    <property type="entry name" value="ADOMET_SYNTHASE_CS"/>
</dbReference>
<dbReference type="InterPro" id="IPR022630">
    <property type="entry name" value="S-AdoMet_synt_C"/>
</dbReference>
<dbReference type="InterPro" id="IPR022629">
    <property type="entry name" value="S-AdoMet_synt_central"/>
</dbReference>
<dbReference type="InterPro" id="IPR022628">
    <property type="entry name" value="S-AdoMet_synt_N"/>
</dbReference>
<dbReference type="InterPro" id="IPR002133">
    <property type="entry name" value="S-AdoMet_synthetase"/>
</dbReference>
<dbReference type="InterPro" id="IPR022636">
    <property type="entry name" value="S-AdoMet_synthetase_sfam"/>
</dbReference>
<dbReference type="NCBIfam" id="TIGR01034">
    <property type="entry name" value="metK"/>
    <property type="match status" value="1"/>
</dbReference>
<dbReference type="PANTHER" id="PTHR11964">
    <property type="entry name" value="S-ADENOSYLMETHIONINE SYNTHETASE"/>
    <property type="match status" value="1"/>
</dbReference>
<dbReference type="Pfam" id="PF02773">
    <property type="entry name" value="S-AdoMet_synt_C"/>
    <property type="match status" value="1"/>
</dbReference>
<dbReference type="Pfam" id="PF02772">
    <property type="entry name" value="S-AdoMet_synt_M"/>
    <property type="match status" value="1"/>
</dbReference>
<dbReference type="Pfam" id="PF00438">
    <property type="entry name" value="S-AdoMet_synt_N"/>
    <property type="match status" value="1"/>
</dbReference>
<dbReference type="PIRSF" id="PIRSF000497">
    <property type="entry name" value="MAT"/>
    <property type="match status" value="1"/>
</dbReference>
<dbReference type="SUPFAM" id="SSF55973">
    <property type="entry name" value="S-adenosylmethionine synthetase"/>
    <property type="match status" value="3"/>
</dbReference>
<dbReference type="PROSITE" id="PS00376">
    <property type="entry name" value="ADOMET_SYNTHASE_1"/>
    <property type="match status" value="1"/>
</dbReference>
<dbReference type="PROSITE" id="PS00377">
    <property type="entry name" value="ADOMET_SYNTHASE_2"/>
    <property type="match status" value="1"/>
</dbReference>
<keyword id="KW-0067">ATP-binding</keyword>
<keyword id="KW-0963">Cytoplasm</keyword>
<keyword id="KW-0460">Magnesium</keyword>
<keyword id="KW-0479">Metal-binding</keyword>
<keyword id="KW-0547">Nucleotide-binding</keyword>
<keyword id="KW-0554">One-carbon metabolism</keyword>
<keyword id="KW-0630">Potassium</keyword>
<keyword id="KW-1185">Reference proteome</keyword>
<keyword id="KW-0808">Transferase</keyword>
<feature type="chain" id="PRO_0000241037" description="S-adenosylmethionine synthase">
    <location>
        <begin position="1"/>
        <end position="384"/>
    </location>
</feature>
<feature type="region of interest" description="Flexible loop" evidence="1">
    <location>
        <begin position="99"/>
        <end position="109"/>
    </location>
</feature>
<feature type="binding site" description="in other chain" evidence="1">
    <location>
        <position position="15"/>
    </location>
    <ligand>
        <name>ATP</name>
        <dbReference type="ChEBI" id="CHEBI:30616"/>
        <note>ligand shared between two neighboring subunits</note>
    </ligand>
</feature>
<feature type="binding site" evidence="1">
    <location>
        <position position="17"/>
    </location>
    <ligand>
        <name>Mg(2+)</name>
        <dbReference type="ChEBI" id="CHEBI:18420"/>
    </ligand>
</feature>
<feature type="binding site" evidence="1">
    <location>
        <position position="43"/>
    </location>
    <ligand>
        <name>K(+)</name>
        <dbReference type="ChEBI" id="CHEBI:29103"/>
    </ligand>
</feature>
<feature type="binding site" description="in other chain" evidence="1">
    <location>
        <position position="56"/>
    </location>
    <ligand>
        <name>L-methionine</name>
        <dbReference type="ChEBI" id="CHEBI:57844"/>
        <note>ligand shared between two neighboring subunits</note>
    </ligand>
</feature>
<feature type="binding site" description="in other chain" evidence="1">
    <location>
        <position position="99"/>
    </location>
    <ligand>
        <name>L-methionine</name>
        <dbReference type="ChEBI" id="CHEBI:57844"/>
        <note>ligand shared between two neighboring subunits</note>
    </ligand>
</feature>
<feature type="binding site" description="in other chain" evidence="1">
    <location>
        <begin position="164"/>
        <end position="166"/>
    </location>
    <ligand>
        <name>ATP</name>
        <dbReference type="ChEBI" id="CHEBI:30616"/>
        <note>ligand shared between two neighboring subunits</note>
    </ligand>
</feature>
<feature type="binding site" description="in other chain" evidence="1">
    <location>
        <begin position="230"/>
        <end position="231"/>
    </location>
    <ligand>
        <name>ATP</name>
        <dbReference type="ChEBI" id="CHEBI:30616"/>
        <note>ligand shared between two neighboring subunits</note>
    </ligand>
</feature>
<feature type="binding site" evidence="1">
    <location>
        <position position="239"/>
    </location>
    <ligand>
        <name>ATP</name>
        <dbReference type="ChEBI" id="CHEBI:30616"/>
        <note>ligand shared between two neighboring subunits</note>
    </ligand>
</feature>
<feature type="binding site" evidence="1">
    <location>
        <position position="239"/>
    </location>
    <ligand>
        <name>L-methionine</name>
        <dbReference type="ChEBI" id="CHEBI:57844"/>
        <note>ligand shared between two neighboring subunits</note>
    </ligand>
</feature>
<feature type="binding site" description="in other chain" evidence="1">
    <location>
        <begin position="245"/>
        <end position="246"/>
    </location>
    <ligand>
        <name>ATP</name>
        <dbReference type="ChEBI" id="CHEBI:30616"/>
        <note>ligand shared between two neighboring subunits</note>
    </ligand>
</feature>
<feature type="binding site" evidence="1">
    <location>
        <position position="262"/>
    </location>
    <ligand>
        <name>ATP</name>
        <dbReference type="ChEBI" id="CHEBI:30616"/>
        <note>ligand shared between two neighboring subunits</note>
    </ligand>
</feature>
<feature type="binding site" evidence="1">
    <location>
        <position position="266"/>
    </location>
    <ligand>
        <name>ATP</name>
        <dbReference type="ChEBI" id="CHEBI:30616"/>
        <note>ligand shared between two neighboring subunits</note>
    </ligand>
</feature>
<feature type="binding site" description="in other chain" evidence="1">
    <location>
        <position position="270"/>
    </location>
    <ligand>
        <name>L-methionine</name>
        <dbReference type="ChEBI" id="CHEBI:57844"/>
        <note>ligand shared between two neighboring subunits</note>
    </ligand>
</feature>
<organism>
    <name type="scientific">Shigella sonnei (strain Ss046)</name>
    <dbReference type="NCBI Taxonomy" id="300269"/>
    <lineage>
        <taxon>Bacteria</taxon>
        <taxon>Pseudomonadati</taxon>
        <taxon>Pseudomonadota</taxon>
        <taxon>Gammaproteobacteria</taxon>
        <taxon>Enterobacterales</taxon>
        <taxon>Enterobacteriaceae</taxon>
        <taxon>Shigella</taxon>
    </lineage>
</organism>